<organism>
    <name type="scientific">Mustela frenata</name>
    <name type="common">Long-tailed weasel</name>
    <name type="synonym">Neogale frenata</name>
    <dbReference type="NCBI Taxonomy" id="3370370"/>
    <lineage>
        <taxon>Eukaryota</taxon>
        <taxon>Metazoa</taxon>
        <taxon>Chordata</taxon>
        <taxon>Craniata</taxon>
        <taxon>Vertebrata</taxon>
        <taxon>Euteleostomi</taxon>
        <taxon>Mammalia</taxon>
        <taxon>Eutheria</taxon>
        <taxon>Laurasiatheria</taxon>
        <taxon>Carnivora</taxon>
        <taxon>Caniformia</taxon>
        <taxon>Musteloidea</taxon>
        <taxon>Mustelidae</taxon>
        <taxon>Mustelinae</taxon>
        <taxon>Neogale</taxon>
    </lineage>
</organism>
<sequence length="379" mass="42620">MTNIRKTHPLTKIINNSFIDLPAPSNISAWWNFGSLLGICLIIQILTGLFLAMHYTSDTATAFSSVTHICRDVNYGWIIRYMHANGASMFFVCLFLHVGRGLYYGSYMFPETWNIGIILLFAVMATAFMGYVLPWGQMSFWGATVITNLLSAIPYIGTDLVEWIWGGFSVDKATLTRFFAFHFILPFIISALAAVHLLFLHETGSNNPSGIPSDSDKIPFHPYYTIKDILGALFLILTLMLLVLFSPDLLGDPDNYIPANPLNTPPHIKPEWYFLFAYAILRSIPNKLGGVLALVLSILVLAIIPLLHTSKQRSMMFRPLSQCLFWLLVADLLTLTWIGGQPVEYPFITIGQLASILYFMILLVLMPIASIIENNLLKW</sequence>
<protein>
    <recommendedName>
        <fullName>Cytochrome b</fullName>
    </recommendedName>
    <alternativeName>
        <fullName>Complex III subunit 3</fullName>
    </alternativeName>
    <alternativeName>
        <fullName>Complex III subunit III</fullName>
    </alternativeName>
    <alternativeName>
        <fullName>Cytochrome b-c1 complex subunit 3</fullName>
    </alternativeName>
    <alternativeName>
        <fullName>Ubiquinol-cytochrome-c reductase complex cytochrome b subunit</fullName>
    </alternativeName>
</protein>
<proteinExistence type="inferred from homology"/>
<keyword id="KW-0249">Electron transport</keyword>
<keyword id="KW-0349">Heme</keyword>
<keyword id="KW-0408">Iron</keyword>
<keyword id="KW-0472">Membrane</keyword>
<keyword id="KW-0479">Metal-binding</keyword>
<keyword id="KW-0496">Mitochondrion</keyword>
<keyword id="KW-0999">Mitochondrion inner membrane</keyword>
<keyword id="KW-0679">Respiratory chain</keyword>
<keyword id="KW-0812">Transmembrane</keyword>
<keyword id="KW-1133">Transmembrane helix</keyword>
<keyword id="KW-0813">Transport</keyword>
<keyword id="KW-0830">Ubiquinone</keyword>
<dbReference type="EMBL" id="AF498153">
    <property type="protein sequence ID" value="AAP19699.1"/>
    <property type="molecule type" value="Genomic_DNA"/>
</dbReference>
<dbReference type="SMR" id="Q85IN9"/>
<dbReference type="GO" id="GO:0005743">
    <property type="term" value="C:mitochondrial inner membrane"/>
    <property type="evidence" value="ECO:0007669"/>
    <property type="project" value="UniProtKB-SubCell"/>
</dbReference>
<dbReference type="GO" id="GO:0045275">
    <property type="term" value="C:respiratory chain complex III"/>
    <property type="evidence" value="ECO:0007669"/>
    <property type="project" value="InterPro"/>
</dbReference>
<dbReference type="GO" id="GO:0046872">
    <property type="term" value="F:metal ion binding"/>
    <property type="evidence" value="ECO:0007669"/>
    <property type="project" value="UniProtKB-KW"/>
</dbReference>
<dbReference type="GO" id="GO:0008121">
    <property type="term" value="F:ubiquinol-cytochrome-c reductase activity"/>
    <property type="evidence" value="ECO:0007669"/>
    <property type="project" value="InterPro"/>
</dbReference>
<dbReference type="GO" id="GO:0006122">
    <property type="term" value="P:mitochondrial electron transport, ubiquinol to cytochrome c"/>
    <property type="evidence" value="ECO:0007669"/>
    <property type="project" value="TreeGrafter"/>
</dbReference>
<dbReference type="CDD" id="cd00290">
    <property type="entry name" value="cytochrome_b_C"/>
    <property type="match status" value="1"/>
</dbReference>
<dbReference type="CDD" id="cd00284">
    <property type="entry name" value="Cytochrome_b_N"/>
    <property type="match status" value="1"/>
</dbReference>
<dbReference type="FunFam" id="1.20.810.10:FF:000002">
    <property type="entry name" value="Cytochrome b"/>
    <property type="match status" value="1"/>
</dbReference>
<dbReference type="Gene3D" id="1.20.810.10">
    <property type="entry name" value="Cytochrome Bc1 Complex, Chain C"/>
    <property type="match status" value="1"/>
</dbReference>
<dbReference type="InterPro" id="IPR005798">
    <property type="entry name" value="Cyt_b/b6_C"/>
</dbReference>
<dbReference type="InterPro" id="IPR036150">
    <property type="entry name" value="Cyt_b/b6_C_sf"/>
</dbReference>
<dbReference type="InterPro" id="IPR005797">
    <property type="entry name" value="Cyt_b/b6_N"/>
</dbReference>
<dbReference type="InterPro" id="IPR027387">
    <property type="entry name" value="Cytb/b6-like_sf"/>
</dbReference>
<dbReference type="InterPro" id="IPR030689">
    <property type="entry name" value="Cytochrome_b"/>
</dbReference>
<dbReference type="InterPro" id="IPR048260">
    <property type="entry name" value="Cytochrome_b_C_euk/bac"/>
</dbReference>
<dbReference type="InterPro" id="IPR048259">
    <property type="entry name" value="Cytochrome_b_N_euk/bac"/>
</dbReference>
<dbReference type="InterPro" id="IPR016174">
    <property type="entry name" value="Di-haem_cyt_TM"/>
</dbReference>
<dbReference type="PANTHER" id="PTHR19271">
    <property type="entry name" value="CYTOCHROME B"/>
    <property type="match status" value="1"/>
</dbReference>
<dbReference type="PANTHER" id="PTHR19271:SF16">
    <property type="entry name" value="CYTOCHROME B"/>
    <property type="match status" value="1"/>
</dbReference>
<dbReference type="Pfam" id="PF00032">
    <property type="entry name" value="Cytochrom_B_C"/>
    <property type="match status" value="1"/>
</dbReference>
<dbReference type="Pfam" id="PF00033">
    <property type="entry name" value="Cytochrome_B"/>
    <property type="match status" value="1"/>
</dbReference>
<dbReference type="PIRSF" id="PIRSF038885">
    <property type="entry name" value="COB"/>
    <property type="match status" value="1"/>
</dbReference>
<dbReference type="SUPFAM" id="SSF81648">
    <property type="entry name" value="a domain/subunit of cytochrome bc1 complex (Ubiquinol-cytochrome c reductase)"/>
    <property type="match status" value="1"/>
</dbReference>
<dbReference type="SUPFAM" id="SSF81342">
    <property type="entry name" value="Transmembrane di-heme cytochromes"/>
    <property type="match status" value="1"/>
</dbReference>
<dbReference type="PROSITE" id="PS51003">
    <property type="entry name" value="CYTB_CTER"/>
    <property type="match status" value="1"/>
</dbReference>
<dbReference type="PROSITE" id="PS51002">
    <property type="entry name" value="CYTB_NTER"/>
    <property type="match status" value="1"/>
</dbReference>
<evidence type="ECO:0000250" key="1"/>
<evidence type="ECO:0000250" key="2">
    <source>
        <dbReference type="UniProtKB" id="P00157"/>
    </source>
</evidence>
<evidence type="ECO:0000255" key="3">
    <source>
        <dbReference type="PROSITE-ProRule" id="PRU00967"/>
    </source>
</evidence>
<evidence type="ECO:0000255" key="4">
    <source>
        <dbReference type="PROSITE-ProRule" id="PRU00968"/>
    </source>
</evidence>
<name>CYB_MUSFR</name>
<feature type="chain" id="PRO_0000061221" description="Cytochrome b">
    <location>
        <begin position="1"/>
        <end position="379"/>
    </location>
</feature>
<feature type="transmembrane region" description="Helical" evidence="2">
    <location>
        <begin position="33"/>
        <end position="53"/>
    </location>
</feature>
<feature type="transmembrane region" description="Helical" evidence="2">
    <location>
        <begin position="77"/>
        <end position="98"/>
    </location>
</feature>
<feature type="transmembrane region" description="Helical" evidence="2">
    <location>
        <begin position="113"/>
        <end position="133"/>
    </location>
</feature>
<feature type="transmembrane region" description="Helical" evidence="2">
    <location>
        <begin position="178"/>
        <end position="198"/>
    </location>
</feature>
<feature type="transmembrane region" description="Helical" evidence="2">
    <location>
        <begin position="226"/>
        <end position="246"/>
    </location>
</feature>
<feature type="transmembrane region" description="Helical" evidence="2">
    <location>
        <begin position="288"/>
        <end position="308"/>
    </location>
</feature>
<feature type="transmembrane region" description="Helical" evidence="2">
    <location>
        <begin position="320"/>
        <end position="340"/>
    </location>
</feature>
<feature type="transmembrane region" description="Helical" evidence="2">
    <location>
        <begin position="347"/>
        <end position="367"/>
    </location>
</feature>
<feature type="binding site" description="axial binding residue" evidence="2">
    <location>
        <position position="83"/>
    </location>
    <ligand>
        <name>heme b</name>
        <dbReference type="ChEBI" id="CHEBI:60344"/>
        <label>b562</label>
    </ligand>
    <ligandPart>
        <name>Fe</name>
        <dbReference type="ChEBI" id="CHEBI:18248"/>
    </ligandPart>
</feature>
<feature type="binding site" description="axial binding residue" evidence="2">
    <location>
        <position position="97"/>
    </location>
    <ligand>
        <name>heme b</name>
        <dbReference type="ChEBI" id="CHEBI:60344"/>
        <label>b566</label>
    </ligand>
    <ligandPart>
        <name>Fe</name>
        <dbReference type="ChEBI" id="CHEBI:18248"/>
    </ligandPart>
</feature>
<feature type="binding site" description="axial binding residue" evidence="2">
    <location>
        <position position="182"/>
    </location>
    <ligand>
        <name>heme b</name>
        <dbReference type="ChEBI" id="CHEBI:60344"/>
        <label>b562</label>
    </ligand>
    <ligandPart>
        <name>Fe</name>
        <dbReference type="ChEBI" id="CHEBI:18248"/>
    </ligandPart>
</feature>
<feature type="binding site" description="axial binding residue" evidence="2">
    <location>
        <position position="196"/>
    </location>
    <ligand>
        <name>heme b</name>
        <dbReference type="ChEBI" id="CHEBI:60344"/>
        <label>b566</label>
    </ligand>
    <ligandPart>
        <name>Fe</name>
        <dbReference type="ChEBI" id="CHEBI:18248"/>
    </ligandPart>
</feature>
<feature type="binding site" evidence="2">
    <location>
        <position position="201"/>
    </location>
    <ligand>
        <name>a ubiquinone</name>
        <dbReference type="ChEBI" id="CHEBI:16389"/>
    </ligand>
</feature>
<reference key="1">
    <citation type="journal article" date="2003" name="Syst. Biol.">
        <title>Type I STS markers are more informative than cytochrome B in phylogenetic reconstruction of the Mustelidae (Mammalia: Carnivora).</title>
        <authorList>
            <person name="Koepfli K.-P."/>
            <person name="Wayne R.K."/>
        </authorList>
    </citation>
    <scope>NUCLEOTIDE SEQUENCE [GENOMIC DNA]</scope>
</reference>
<accession>Q85IN9</accession>
<gene>
    <name type="primary">MT-CYB</name>
    <name type="synonym">COB</name>
    <name type="synonym">CYTB</name>
    <name type="synonym">MTCYB</name>
</gene>
<comment type="function">
    <text evidence="2">Component of the ubiquinol-cytochrome c reductase complex (complex III or cytochrome b-c1 complex) that is part of the mitochondrial respiratory chain. The b-c1 complex mediates electron transfer from ubiquinol to cytochrome c. Contributes to the generation of a proton gradient across the mitochondrial membrane that is then used for ATP synthesis.</text>
</comment>
<comment type="cofactor">
    <cofactor evidence="2">
        <name>heme b</name>
        <dbReference type="ChEBI" id="CHEBI:60344"/>
    </cofactor>
    <text evidence="2">Binds 2 heme b groups non-covalently.</text>
</comment>
<comment type="subunit">
    <text evidence="2">The cytochrome bc1 complex contains 11 subunits: 3 respiratory subunits (MT-CYB, CYC1 and UQCRFS1), 2 core proteins (UQCRC1 and UQCRC2) and 6 low-molecular weight proteins (UQCRH/QCR6, UQCRB/QCR7, UQCRQ/QCR8, UQCR10/QCR9, UQCR11/QCR10 and a cleavage product of UQCRFS1). This cytochrome bc1 complex then forms a dimer.</text>
</comment>
<comment type="subcellular location">
    <subcellularLocation>
        <location evidence="2">Mitochondrion inner membrane</location>
        <topology evidence="2">Multi-pass membrane protein</topology>
    </subcellularLocation>
</comment>
<comment type="miscellaneous">
    <text evidence="1">Heme 1 (or BL or b562) is low-potential and absorbs at about 562 nm, and heme 2 (or BH or b566) is high-potential and absorbs at about 566 nm.</text>
</comment>
<comment type="similarity">
    <text evidence="3 4">Belongs to the cytochrome b family.</text>
</comment>
<comment type="caution">
    <text evidence="2">The full-length protein contains only eight transmembrane helices, not nine as predicted by bioinformatics tools.</text>
</comment>
<geneLocation type="mitochondrion"/>